<reference key="1">
    <citation type="journal article" date="2007" name="Genome Res.">
        <title>Genome characteristics of facultatively symbiotic Frankia sp. strains reflect host range and host plant biogeography.</title>
        <authorList>
            <person name="Normand P."/>
            <person name="Lapierre P."/>
            <person name="Tisa L.S."/>
            <person name="Gogarten J.P."/>
            <person name="Alloisio N."/>
            <person name="Bagnarol E."/>
            <person name="Bassi C.A."/>
            <person name="Berry A.M."/>
            <person name="Bickhart D.M."/>
            <person name="Choisne N."/>
            <person name="Couloux A."/>
            <person name="Cournoyer B."/>
            <person name="Cruveiller S."/>
            <person name="Daubin V."/>
            <person name="Demange N."/>
            <person name="Francino M.P."/>
            <person name="Goltsman E."/>
            <person name="Huang Y."/>
            <person name="Kopp O.R."/>
            <person name="Labarre L."/>
            <person name="Lapidus A."/>
            <person name="Lavire C."/>
            <person name="Marechal J."/>
            <person name="Martinez M."/>
            <person name="Mastronunzio J.E."/>
            <person name="Mullin B.C."/>
            <person name="Niemann J."/>
            <person name="Pujic P."/>
            <person name="Rawnsley T."/>
            <person name="Rouy Z."/>
            <person name="Schenowitz C."/>
            <person name="Sellstedt A."/>
            <person name="Tavares F."/>
            <person name="Tomkins J.P."/>
            <person name="Vallenet D."/>
            <person name="Valverde C."/>
            <person name="Wall L.G."/>
            <person name="Wang Y."/>
            <person name="Medigue C."/>
            <person name="Benson D.R."/>
        </authorList>
    </citation>
    <scope>NUCLEOTIDE SEQUENCE [LARGE SCALE GENOMIC DNA]</scope>
    <source>
        <strain>DSM 45986 / CECT 9034 / ACN14a</strain>
    </source>
</reference>
<sequence>MHLTHLSLVDFRSYPSLDLTLGPGVVTLVGRNGQGKTNLIEAIGYVATLASHRVSADAPLVRQGASHAVVRARIVRGDRAALVELEIVPGRANRARLNRAPVPRPRDVLGLLCTVLFAPEDLALVKGDPAGRRQFLDELLVARTPRMAAVLADYDRVLKQRSTLLRTAGAARRAGGKGDLRTLDVWDGYLASYGAELLTARLALVEALRPGVAGAYAAVAGAQAAVGFEYRASVPQPAPDPVRPDRERWEEAIRAELVAARPREIERGQTLVGPHRDDLLLTVDGLPARGYASHGESWSLALALRLASFELLRADDREPVLLLDDVFAELDVQRRSRLAELVAPAEQVLVTAAVEADVPAELTGTRYVVAAGEVLRAS</sequence>
<feature type="chain" id="PRO_1000048525" description="DNA replication and repair protein RecF">
    <location>
        <begin position="1"/>
        <end position="378"/>
    </location>
</feature>
<feature type="binding site" evidence="1">
    <location>
        <begin position="30"/>
        <end position="37"/>
    </location>
    <ligand>
        <name>ATP</name>
        <dbReference type="ChEBI" id="CHEBI:30616"/>
    </ligand>
</feature>
<gene>
    <name evidence="1" type="primary">recF</name>
    <name type="ordered locus">FRAAL0005</name>
</gene>
<name>RECF_FRAAA</name>
<protein>
    <recommendedName>
        <fullName evidence="1">DNA replication and repair protein RecF</fullName>
    </recommendedName>
</protein>
<comment type="function">
    <text evidence="1">The RecF protein is involved in DNA metabolism; it is required for DNA replication and normal SOS inducibility. RecF binds preferentially to single-stranded, linear DNA. It also seems to bind ATP.</text>
</comment>
<comment type="subcellular location">
    <subcellularLocation>
        <location evidence="1">Cytoplasm</location>
    </subcellularLocation>
</comment>
<comment type="similarity">
    <text evidence="1">Belongs to the RecF family.</text>
</comment>
<evidence type="ECO:0000255" key="1">
    <source>
        <dbReference type="HAMAP-Rule" id="MF_00365"/>
    </source>
</evidence>
<proteinExistence type="inferred from homology"/>
<accession>Q0RUP6</accession>
<organism>
    <name type="scientific">Frankia alni (strain DSM 45986 / CECT 9034 / ACN14a)</name>
    <dbReference type="NCBI Taxonomy" id="326424"/>
    <lineage>
        <taxon>Bacteria</taxon>
        <taxon>Bacillati</taxon>
        <taxon>Actinomycetota</taxon>
        <taxon>Actinomycetes</taxon>
        <taxon>Frankiales</taxon>
        <taxon>Frankiaceae</taxon>
        <taxon>Frankia</taxon>
    </lineage>
</organism>
<keyword id="KW-0067">ATP-binding</keyword>
<keyword id="KW-0963">Cytoplasm</keyword>
<keyword id="KW-0227">DNA damage</keyword>
<keyword id="KW-0234">DNA repair</keyword>
<keyword id="KW-0235">DNA replication</keyword>
<keyword id="KW-0238">DNA-binding</keyword>
<keyword id="KW-0547">Nucleotide-binding</keyword>
<keyword id="KW-1185">Reference proteome</keyword>
<keyword id="KW-0742">SOS response</keyword>
<dbReference type="EMBL" id="CT573213">
    <property type="protein sequence ID" value="CAJ58688.1"/>
    <property type="molecule type" value="Genomic_DNA"/>
</dbReference>
<dbReference type="RefSeq" id="WP_011601273.1">
    <property type="nucleotide sequence ID" value="NC_008278.1"/>
</dbReference>
<dbReference type="SMR" id="Q0RUP6"/>
<dbReference type="STRING" id="326424.FRAAL0005"/>
<dbReference type="KEGG" id="fal:FRAAL0005"/>
<dbReference type="eggNOG" id="COG1195">
    <property type="taxonomic scope" value="Bacteria"/>
</dbReference>
<dbReference type="HOGENOM" id="CLU_040267_1_1_11"/>
<dbReference type="OrthoDB" id="9803889at2"/>
<dbReference type="Proteomes" id="UP000000657">
    <property type="component" value="Chromosome"/>
</dbReference>
<dbReference type="GO" id="GO:0005737">
    <property type="term" value="C:cytoplasm"/>
    <property type="evidence" value="ECO:0007669"/>
    <property type="project" value="UniProtKB-SubCell"/>
</dbReference>
<dbReference type="GO" id="GO:0005524">
    <property type="term" value="F:ATP binding"/>
    <property type="evidence" value="ECO:0007669"/>
    <property type="project" value="UniProtKB-UniRule"/>
</dbReference>
<dbReference type="GO" id="GO:0003697">
    <property type="term" value="F:single-stranded DNA binding"/>
    <property type="evidence" value="ECO:0007669"/>
    <property type="project" value="UniProtKB-UniRule"/>
</dbReference>
<dbReference type="GO" id="GO:0006260">
    <property type="term" value="P:DNA replication"/>
    <property type="evidence" value="ECO:0007669"/>
    <property type="project" value="UniProtKB-UniRule"/>
</dbReference>
<dbReference type="GO" id="GO:0000731">
    <property type="term" value="P:DNA synthesis involved in DNA repair"/>
    <property type="evidence" value="ECO:0007669"/>
    <property type="project" value="TreeGrafter"/>
</dbReference>
<dbReference type="GO" id="GO:0006302">
    <property type="term" value="P:double-strand break repair"/>
    <property type="evidence" value="ECO:0007669"/>
    <property type="project" value="TreeGrafter"/>
</dbReference>
<dbReference type="GO" id="GO:0009432">
    <property type="term" value="P:SOS response"/>
    <property type="evidence" value="ECO:0007669"/>
    <property type="project" value="UniProtKB-UniRule"/>
</dbReference>
<dbReference type="CDD" id="cd03242">
    <property type="entry name" value="ABC_RecF"/>
    <property type="match status" value="1"/>
</dbReference>
<dbReference type="Gene3D" id="3.40.50.300">
    <property type="entry name" value="P-loop containing nucleotide triphosphate hydrolases"/>
    <property type="match status" value="1"/>
</dbReference>
<dbReference type="Gene3D" id="1.20.1050.90">
    <property type="entry name" value="RecF/RecN/SMC, N-terminal domain"/>
    <property type="match status" value="1"/>
</dbReference>
<dbReference type="HAMAP" id="MF_00365">
    <property type="entry name" value="RecF"/>
    <property type="match status" value="1"/>
</dbReference>
<dbReference type="InterPro" id="IPR001238">
    <property type="entry name" value="DNA-binding_RecF"/>
</dbReference>
<dbReference type="InterPro" id="IPR018078">
    <property type="entry name" value="DNA-binding_RecF_CS"/>
</dbReference>
<dbReference type="InterPro" id="IPR027417">
    <property type="entry name" value="P-loop_NTPase"/>
</dbReference>
<dbReference type="InterPro" id="IPR003395">
    <property type="entry name" value="RecF/RecN/SMC_N"/>
</dbReference>
<dbReference type="InterPro" id="IPR042174">
    <property type="entry name" value="RecF_2"/>
</dbReference>
<dbReference type="NCBIfam" id="TIGR00611">
    <property type="entry name" value="recf"/>
    <property type="match status" value="1"/>
</dbReference>
<dbReference type="PANTHER" id="PTHR32182">
    <property type="entry name" value="DNA REPLICATION AND REPAIR PROTEIN RECF"/>
    <property type="match status" value="1"/>
</dbReference>
<dbReference type="PANTHER" id="PTHR32182:SF0">
    <property type="entry name" value="DNA REPLICATION AND REPAIR PROTEIN RECF"/>
    <property type="match status" value="1"/>
</dbReference>
<dbReference type="Pfam" id="PF02463">
    <property type="entry name" value="SMC_N"/>
    <property type="match status" value="1"/>
</dbReference>
<dbReference type="SUPFAM" id="SSF52540">
    <property type="entry name" value="P-loop containing nucleoside triphosphate hydrolases"/>
    <property type="match status" value="1"/>
</dbReference>
<dbReference type="PROSITE" id="PS00617">
    <property type="entry name" value="RECF_1"/>
    <property type="match status" value="1"/>
</dbReference>
<dbReference type="PROSITE" id="PS00618">
    <property type="entry name" value="RECF_2"/>
    <property type="match status" value="1"/>
</dbReference>